<dbReference type="EC" id="2.5.1.55" evidence="1"/>
<dbReference type="EMBL" id="CP000267">
    <property type="protein sequence ID" value="ABD70365.1"/>
    <property type="molecule type" value="Genomic_DNA"/>
</dbReference>
<dbReference type="RefSeq" id="WP_011464933.1">
    <property type="nucleotide sequence ID" value="NC_007908.1"/>
</dbReference>
<dbReference type="SMR" id="Q21V38"/>
<dbReference type="STRING" id="338969.Rfer_2649"/>
<dbReference type="KEGG" id="rfr:Rfer_2649"/>
<dbReference type="eggNOG" id="COG2877">
    <property type="taxonomic scope" value="Bacteria"/>
</dbReference>
<dbReference type="HOGENOM" id="CLU_036666_0_0_4"/>
<dbReference type="OrthoDB" id="9776934at2"/>
<dbReference type="UniPathway" id="UPA00030"/>
<dbReference type="UniPathway" id="UPA00357">
    <property type="reaction ID" value="UER00474"/>
</dbReference>
<dbReference type="Proteomes" id="UP000008332">
    <property type="component" value="Chromosome"/>
</dbReference>
<dbReference type="GO" id="GO:0005737">
    <property type="term" value="C:cytoplasm"/>
    <property type="evidence" value="ECO:0007669"/>
    <property type="project" value="UniProtKB-SubCell"/>
</dbReference>
<dbReference type="GO" id="GO:0008676">
    <property type="term" value="F:3-deoxy-8-phosphooctulonate synthase activity"/>
    <property type="evidence" value="ECO:0007669"/>
    <property type="project" value="UniProtKB-UniRule"/>
</dbReference>
<dbReference type="GO" id="GO:0019294">
    <property type="term" value="P:keto-3-deoxy-D-manno-octulosonic acid biosynthetic process"/>
    <property type="evidence" value="ECO:0007669"/>
    <property type="project" value="UniProtKB-UniRule"/>
</dbReference>
<dbReference type="Gene3D" id="3.20.20.70">
    <property type="entry name" value="Aldolase class I"/>
    <property type="match status" value="1"/>
</dbReference>
<dbReference type="HAMAP" id="MF_00056">
    <property type="entry name" value="KDO8P_synth"/>
    <property type="match status" value="1"/>
</dbReference>
<dbReference type="InterPro" id="IPR013785">
    <property type="entry name" value="Aldolase_TIM"/>
</dbReference>
<dbReference type="InterPro" id="IPR006218">
    <property type="entry name" value="DAHP1/KDSA"/>
</dbReference>
<dbReference type="InterPro" id="IPR006269">
    <property type="entry name" value="KDO8P_synthase"/>
</dbReference>
<dbReference type="NCBIfam" id="TIGR01362">
    <property type="entry name" value="KDO8P_synth"/>
    <property type="match status" value="1"/>
</dbReference>
<dbReference type="NCBIfam" id="NF003543">
    <property type="entry name" value="PRK05198.1"/>
    <property type="match status" value="1"/>
</dbReference>
<dbReference type="PANTHER" id="PTHR21057">
    <property type="entry name" value="PHOSPHO-2-DEHYDRO-3-DEOXYHEPTONATE ALDOLASE"/>
    <property type="match status" value="1"/>
</dbReference>
<dbReference type="Pfam" id="PF00793">
    <property type="entry name" value="DAHP_synth_1"/>
    <property type="match status" value="1"/>
</dbReference>
<dbReference type="SUPFAM" id="SSF51569">
    <property type="entry name" value="Aldolase"/>
    <property type="match status" value="1"/>
</dbReference>
<reference key="1">
    <citation type="submission" date="2006-02" db="EMBL/GenBank/DDBJ databases">
        <title>Complete sequence of chromosome of Rhodoferax ferrireducens DSM 15236.</title>
        <authorList>
            <person name="Copeland A."/>
            <person name="Lucas S."/>
            <person name="Lapidus A."/>
            <person name="Barry K."/>
            <person name="Detter J.C."/>
            <person name="Glavina del Rio T."/>
            <person name="Hammon N."/>
            <person name="Israni S."/>
            <person name="Pitluck S."/>
            <person name="Brettin T."/>
            <person name="Bruce D."/>
            <person name="Han C."/>
            <person name="Tapia R."/>
            <person name="Gilna P."/>
            <person name="Kiss H."/>
            <person name="Schmutz J."/>
            <person name="Larimer F."/>
            <person name="Land M."/>
            <person name="Kyrpides N."/>
            <person name="Ivanova N."/>
            <person name="Richardson P."/>
        </authorList>
    </citation>
    <scope>NUCLEOTIDE SEQUENCE [LARGE SCALE GENOMIC DNA]</scope>
    <source>
        <strain>ATCC BAA-621 / DSM 15236 / T118</strain>
    </source>
</reference>
<feature type="chain" id="PRO_0000304479" description="2-dehydro-3-deoxyphosphooctonate aldolase">
    <location>
        <begin position="1"/>
        <end position="285"/>
    </location>
</feature>
<gene>
    <name evidence="1" type="primary">kdsA</name>
    <name type="ordered locus">Rfer_2649</name>
</gene>
<proteinExistence type="inferred from homology"/>
<keyword id="KW-0963">Cytoplasm</keyword>
<keyword id="KW-0448">Lipopolysaccharide biosynthesis</keyword>
<keyword id="KW-1185">Reference proteome</keyword>
<keyword id="KW-0808">Transferase</keyword>
<organism>
    <name type="scientific">Albidiferax ferrireducens (strain ATCC BAA-621 / DSM 15236 / T118)</name>
    <name type="common">Rhodoferax ferrireducens</name>
    <dbReference type="NCBI Taxonomy" id="338969"/>
    <lineage>
        <taxon>Bacteria</taxon>
        <taxon>Pseudomonadati</taxon>
        <taxon>Pseudomonadota</taxon>
        <taxon>Betaproteobacteria</taxon>
        <taxon>Burkholderiales</taxon>
        <taxon>Comamonadaceae</taxon>
        <taxon>Rhodoferax</taxon>
    </lineage>
</organism>
<evidence type="ECO:0000255" key="1">
    <source>
        <dbReference type="HAMAP-Rule" id="MF_00056"/>
    </source>
</evidence>
<accession>Q21V38</accession>
<comment type="catalytic activity">
    <reaction evidence="1">
        <text>D-arabinose 5-phosphate + phosphoenolpyruvate + H2O = 3-deoxy-alpha-D-manno-2-octulosonate-8-phosphate + phosphate</text>
        <dbReference type="Rhea" id="RHEA:14053"/>
        <dbReference type="ChEBI" id="CHEBI:15377"/>
        <dbReference type="ChEBI" id="CHEBI:43474"/>
        <dbReference type="ChEBI" id="CHEBI:57693"/>
        <dbReference type="ChEBI" id="CHEBI:58702"/>
        <dbReference type="ChEBI" id="CHEBI:85985"/>
        <dbReference type="EC" id="2.5.1.55"/>
    </reaction>
</comment>
<comment type="pathway">
    <text evidence="1">Carbohydrate biosynthesis; 3-deoxy-D-manno-octulosonate biosynthesis; 3-deoxy-D-manno-octulosonate from D-ribulose 5-phosphate: step 2/3.</text>
</comment>
<comment type="pathway">
    <text evidence="1">Bacterial outer membrane biogenesis; lipopolysaccharide biosynthesis.</text>
</comment>
<comment type="subcellular location">
    <subcellularLocation>
        <location evidence="1">Cytoplasm</location>
    </subcellularLocation>
</comment>
<comment type="similarity">
    <text evidence="1">Belongs to the KdsA family.</text>
</comment>
<protein>
    <recommendedName>
        <fullName evidence="1">2-dehydro-3-deoxyphosphooctonate aldolase</fullName>
        <ecNumber evidence="1">2.5.1.55</ecNumber>
    </recommendedName>
    <alternativeName>
        <fullName evidence="1">3-deoxy-D-manno-octulosonic acid 8-phosphate synthase</fullName>
    </alternativeName>
    <alternativeName>
        <fullName evidence="1">KDO-8-phosphate synthase</fullName>
        <shortName evidence="1">KDO 8-P synthase</shortName>
        <shortName evidence="1">KDOPS</shortName>
    </alternativeName>
    <alternativeName>
        <fullName evidence="1">Phospho-2-dehydro-3-deoxyoctonate aldolase</fullName>
    </alternativeName>
</protein>
<name>KDSA_ALBFT</name>
<sequence length="285" mass="30314">MKLCGFEVGLNQPLFLIAGPCVIESEQLQMDTAGTLKEITASLGIAFIFKSSFDKANRSSGSTFRGPGIERGLEILAKVKRELGVPILTDIHSEDQIAQVASVVDVLQTPAFLCRQTDFIRAVAQSGLPVNIKKGQFLAPGDMKNVIDKARAAAREKGLNEDNFMACERGVSFGYNNLVSDMRSLAIMRDTGAPVVFDATHSVQLPGGQGTSSGGQREMVPVLARAAVAVGVAGLFMETHPDPSKALSDGPNAVPLKHMRALLETLVALDAVTKKNGFLENSFAA</sequence>